<proteinExistence type="inferred from homology"/>
<reference key="1">
    <citation type="journal article" date="2005" name="Proc. Natl. Acad. Sci. U.S.A.">
        <title>Complete genome sequencing of Anaplasma marginale reveals that the surface is skewed to two superfamilies of outer membrane proteins.</title>
        <authorList>
            <person name="Brayton K.A."/>
            <person name="Kappmeyer L.S."/>
            <person name="Herndon D.R."/>
            <person name="Dark M.J."/>
            <person name="Tibbals D.L."/>
            <person name="Palmer G.H."/>
            <person name="McGuire T.C."/>
            <person name="Knowles D.P. Jr."/>
        </authorList>
    </citation>
    <scope>NUCLEOTIDE SEQUENCE [LARGE SCALE GENOMIC DNA]</scope>
    <source>
        <strain>St. Maries</strain>
    </source>
</reference>
<evidence type="ECO:0000255" key="1">
    <source>
        <dbReference type="HAMAP-Rule" id="MF_00034"/>
    </source>
</evidence>
<name>RUVC_ANAMM</name>
<organism>
    <name type="scientific">Anaplasma marginale (strain St. Maries)</name>
    <dbReference type="NCBI Taxonomy" id="234826"/>
    <lineage>
        <taxon>Bacteria</taxon>
        <taxon>Pseudomonadati</taxon>
        <taxon>Pseudomonadota</taxon>
        <taxon>Alphaproteobacteria</taxon>
        <taxon>Rickettsiales</taxon>
        <taxon>Anaplasmataceae</taxon>
        <taxon>Anaplasma</taxon>
    </lineage>
</organism>
<dbReference type="EC" id="3.1.21.10" evidence="1"/>
<dbReference type="EMBL" id="CP000030">
    <property type="protein sequence ID" value="AAV87093.1"/>
    <property type="molecule type" value="Genomic_DNA"/>
</dbReference>
<dbReference type="SMR" id="Q5P9D7"/>
<dbReference type="KEGG" id="ama:AM1299"/>
<dbReference type="HOGENOM" id="CLU_091257_1_0_5"/>
<dbReference type="GO" id="GO:0005737">
    <property type="term" value="C:cytoplasm"/>
    <property type="evidence" value="ECO:0007669"/>
    <property type="project" value="UniProtKB-SubCell"/>
</dbReference>
<dbReference type="GO" id="GO:0048476">
    <property type="term" value="C:Holliday junction resolvase complex"/>
    <property type="evidence" value="ECO:0007669"/>
    <property type="project" value="UniProtKB-UniRule"/>
</dbReference>
<dbReference type="GO" id="GO:0008821">
    <property type="term" value="F:crossover junction DNA endonuclease activity"/>
    <property type="evidence" value="ECO:0007669"/>
    <property type="project" value="UniProtKB-UniRule"/>
</dbReference>
<dbReference type="GO" id="GO:0003677">
    <property type="term" value="F:DNA binding"/>
    <property type="evidence" value="ECO:0007669"/>
    <property type="project" value="UniProtKB-KW"/>
</dbReference>
<dbReference type="GO" id="GO:0000287">
    <property type="term" value="F:magnesium ion binding"/>
    <property type="evidence" value="ECO:0007669"/>
    <property type="project" value="UniProtKB-UniRule"/>
</dbReference>
<dbReference type="GO" id="GO:0006310">
    <property type="term" value="P:DNA recombination"/>
    <property type="evidence" value="ECO:0007669"/>
    <property type="project" value="UniProtKB-UniRule"/>
</dbReference>
<dbReference type="GO" id="GO:0006281">
    <property type="term" value="P:DNA repair"/>
    <property type="evidence" value="ECO:0007669"/>
    <property type="project" value="UniProtKB-UniRule"/>
</dbReference>
<dbReference type="CDD" id="cd16962">
    <property type="entry name" value="RuvC"/>
    <property type="match status" value="1"/>
</dbReference>
<dbReference type="FunFam" id="3.30.420.10:FF:000002">
    <property type="entry name" value="Crossover junction endodeoxyribonuclease RuvC"/>
    <property type="match status" value="1"/>
</dbReference>
<dbReference type="Gene3D" id="3.30.420.10">
    <property type="entry name" value="Ribonuclease H-like superfamily/Ribonuclease H"/>
    <property type="match status" value="1"/>
</dbReference>
<dbReference type="HAMAP" id="MF_00034">
    <property type="entry name" value="RuvC"/>
    <property type="match status" value="1"/>
</dbReference>
<dbReference type="InterPro" id="IPR012337">
    <property type="entry name" value="RNaseH-like_sf"/>
</dbReference>
<dbReference type="InterPro" id="IPR036397">
    <property type="entry name" value="RNaseH_sf"/>
</dbReference>
<dbReference type="InterPro" id="IPR002176">
    <property type="entry name" value="X-over_junc_endoDNase_RuvC"/>
</dbReference>
<dbReference type="NCBIfam" id="TIGR00228">
    <property type="entry name" value="ruvC"/>
    <property type="match status" value="1"/>
</dbReference>
<dbReference type="PANTHER" id="PTHR30194">
    <property type="entry name" value="CROSSOVER JUNCTION ENDODEOXYRIBONUCLEASE RUVC"/>
    <property type="match status" value="1"/>
</dbReference>
<dbReference type="PANTHER" id="PTHR30194:SF3">
    <property type="entry name" value="CROSSOVER JUNCTION ENDODEOXYRIBONUCLEASE RUVC"/>
    <property type="match status" value="1"/>
</dbReference>
<dbReference type="Pfam" id="PF02075">
    <property type="entry name" value="RuvC"/>
    <property type="match status" value="1"/>
</dbReference>
<dbReference type="PRINTS" id="PR00696">
    <property type="entry name" value="RSOLVASERUVC"/>
</dbReference>
<dbReference type="SUPFAM" id="SSF53098">
    <property type="entry name" value="Ribonuclease H-like"/>
    <property type="match status" value="1"/>
</dbReference>
<feature type="chain" id="PRO_0000225118" description="Crossover junction endodeoxyribonuclease RuvC">
    <location>
        <begin position="1"/>
        <end position="165"/>
    </location>
</feature>
<feature type="active site" evidence="1">
    <location>
        <position position="7"/>
    </location>
</feature>
<feature type="active site" evidence="1">
    <location>
        <position position="68"/>
    </location>
</feature>
<feature type="active site" evidence="1">
    <location>
        <position position="142"/>
    </location>
</feature>
<feature type="binding site" evidence="1">
    <location>
        <position position="7"/>
    </location>
    <ligand>
        <name>Mg(2+)</name>
        <dbReference type="ChEBI" id="CHEBI:18420"/>
        <label>1</label>
    </ligand>
</feature>
<feature type="binding site" evidence="1">
    <location>
        <position position="68"/>
    </location>
    <ligand>
        <name>Mg(2+)</name>
        <dbReference type="ChEBI" id="CHEBI:18420"/>
        <label>2</label>
    </ligand>
</feature>
<feature type="binding site" evidence="1">
    <location>
        <position position="142"/>
    </location>
    <ligand>
        <name>Mg(2+)</name>
        <dbReference type="ChEBI" id="CHEBI:18420"/>
        <label>1</label>
    </ligand>
</feature>
<accession>Q5P9D7</accession>
<keyword id="KW-0963">Cytoplasm</keyword>
<keyword id="KW-0227">DNA damage</keyword>
<keyword id="KW-0233">DNA recombination</keyword>
<keyword id="KW-0234">DNA repair</keyword>
<keyword id="KW-0238">DNA-binding</keyword>
<keyword id="KW-0255">Endonuclease</keyword>
<keyword id="KW-0378">Hydrolase</keyword>
<keyword id="KW-0460">Magnesium</keyword>
<keyword id="KW-0479">Metal-binding</keyword>
<keyword id="KW-0540">Nuclease</keyword>
<protein>
    <recommendedName>
        <fullName evidence="1">Crossover junction endodeoxyribonuclease RuvC</fullName>
        <ecNumber evidence="1">3.1.21.10</ecNumber>
    </recommendedName>
    <alternativeName>
        <fullName evidence="1">Holliday junction nuclease RuvC</fullName>
    </alternativeName>
    <alternativeName>
        <fullName evidence="1">Holliday junction resolvase RuvC</fullName>
    </alternativeName>
</protein>
<sequence>MMIIGIDPGLEFTGWGVVSSTNSQSVCLLDSGVISTRGISRESEKLYKIYVSLLSVLSLYKIDEASIEKVFINSNPRSSMSLCYARAASTISVMSRGIDIYEYSSTAIKKCITGNGMAPKEQVSFMVRSSLGIKQDVEINNHSSDAIAAALCHVYNTRNRNFALK</sequence>
<comment type="function">
    <text evidence="1">The RuvA-RuvB-RuvC complex processes Holliday junction (HJ) DNA during genetic recombination and DNA repair. Endonuclease that resolves HJ intermediates. Cleaves cruciform DNA by making single-stranded nicks across the HJ at symmetrical positions within the homologous arms, yielding a 5'-phosphate and a 3'-hydroxyl group; requires a central core of homology in the junction. The consensus cleavage sequence is 5'-(A/T)TT(C/G)-3'. Cleavage occurs on the 3'-side of the TT dinucleotide at the point of strand exchange. HJ branch migration catalyzed by RuvA-RuvB allows RuvC to scan DNA until it finds its consensus sequence, where it cleaves and resolves the cruciform DNA.</text>
</comment>
<comment type="catalytic activity">
    <reaction evidence="1">
        <text>Endonucleolytic cleavage at a junction such as a reciprocal single-stranded crossover between two homologous DNA duplexes (Holliday junction).</text>
        <dbReference type="EC" id="3.1.21.10"/>
    </reaction>
</comment>
<comment type="cofactor">
    <cofactor evidence="1">
        <name>Mg(2+)</name>
        <dbReference type="ChEBI" id="CHEBI:18420"/>
    </cofactor>
    <text evidence="1">Binds 2 Mg(2+) ion per subunit.</text>
</comment>
<comment type="subunit">
    <text evidence="1">Homodimer which binds Holliday junction (HJ) DNA. The HJ becomes 2-fold symmetrical on binding to RuvC with unstacked arms; it has a different conformation from HJ DNA in complex with RuvA. In the full resolvosome a probable DNA-RuvA(4)-RuvB(12)-RuvC(2) complex forms which resolves the HJ.</text>
</comment>
<comment type="subcellular location">
    <subcellularLocation>
        <location evidence="1">Cytoplasm</location>
    </subcellularLocation>
</comment>
<comment type="similarity">
    <text evidence="1">Belongs to the RuvC family.</text>
</comment>
<gene>
    <name evidence="1" type="primary">ruvC</name>
    <name type="ordered locus">AM1299</name>
</gene>